<protein>
    <recommendedName>
        <fullName>Probable ascorbate-specific transmembrane electron transporter 1</fullName>
        <ecNumber>1.-.-.-</ecNumber>
    </recommendedName>
    <alternativeName>
        <fullName>Cytochrome b561-1</fullName>
    </alternativeName>
</protein>
<accession>A3A9H6</accession>
<accession>Q0DZ69</accession>
<accession>Q6H7R7</accession>
<comment type="function">
    <text evidence="1">Two-heme-containing cytochrome. Catalyzes ascorbate-dependent trans-membrane electron transfer by utilizing a concerted H(+)/e(-) transfer mechanism (By similarity).</text>
</comment>
<comment type="cofactor">
    <cofactor evidence="2">
        <name>heme b</name>
        <dbReference type="ChEBI" id="CHEBI:60344"/>
    </cofactor>
    <text evidence="2">Binds 2 heme b groups non-covalently.</text>
</comment>
<comment type="subcellular location">
    <subcellularLocation>
        <location evidence="5">Membrane</location>
        <topology evidence="5">Multi-pass membrane protein</topology>
    </subcellularLocation>
</comment>
<comment type="sequence caution" evidence="5">
    <conflict type="erroneous gene model prediction">
        <sequence resource="EMBL-CDS" id="BAD25232"/>
    </conflict>
</comment>
<feature type="chain" id="PRO_0000416689" description="Probable ascorbate-specific transmembrane electron transporter 1">
    <location>
        <begin position="1"/>
        <end position="234"/>
    </location>
</feature>
<feature type="topological domain" description="Cytoplasmic" evidence="3">
    <location>
        <begin position="1"/>
        <end position="9"/>
    </location>
</feature>
<feature type="transmembrane region" description="Helical" evidence="3">
    <location>
        <begin position="10"/>
        <end position="30"/>
    </location>
</feature>
<feature type="topological domain" description="Extracellular" evidence="3">
    <location>
        <begin position="31"/>
        <end position="48"/>
    </location>
</feature>
<feature type="transmembrane region" description="Helical" evidence="3">
    <location>
        <begin position="49"/>
        <end position="69"/>
    </location>
</feature>
<feature type="topological domain" description="Cytoplasmic" evidence="3">
    <location>
        <begin position="70"/>
        <end position="82"/>
    </location>
</feature>
<feature type="transmembrane region" description="Helical" evidence="3">
    <location>
        <begin position="83"/>
        <end position="103"/>
    </location>
</feature>
<feature type="topological domain" description="Extracellular" evidence="3">
    <location>
        <begin position="104"/>
        <end position="121"/>
    </location>
</feature>
<feature type="transmembrane region" description="Helical" evidence="3">
    <location>
        <begin position="122"/>
        <end position="142"/>
    </location>
</feature>
<feature type="topological domain" description="Cytoplasmic" evidence="3">
    <location>
        <begin position="143"/>
        <end position="151"/>
    </location>
</feature>
<feature type="transmembrane region" description="Helical" evidence="3">
    <location>
        <begin position="152"/>
        <end position="172"/>
    </location>
</feature>
<feature type="topological domain" description="Extracellular" evidence="3">
    <location>
        <begin position="173"/>
        <end position="194"/>
    </location>
</feature>
<feature type="transmembrane region" description="Helical" evidence="3">
    <location>
        <begin position="195"/>
        <end position="215"/>
    </location>
</feature>
<feature type="topological domain" description="Cytoplasmic" evidence="3">
    <location>
        <begin position="216"/>
        <end position="234"/>
    </location>
</feature>
<feature type="domain" description="Cytochrome b561" evidence="4">
    <location>
        <begin position="13"/>
        <end position="217"/>
    </location>
</feature>
<feature type="binding site" description="axial binding residue" evidence="2">
    <location>
        <position position="50"/>
    </location>
    <ligand>
        <name>heme b</name>
        <dbReference type="ChEBI" id="CHEBI:60344"/>
        <label>1</label>
    </ligand>
    <ligandPart>
        <name>Fe</name>
        <dbReference type="ChEBI" id="CHEBI:18248"/>
    </ligandPart>
</feature>
<feature type="binding site" evidence="1">
    <location>
        <begin position="65"/>
        <end position="73"/>
    </location>
    <ligand>
        <name>L-ascorbate</name>
        <dbReference type="ChEBI" id="CHEBI:38290"/>
    </ligand>
</feature>
<feature type="binding site" description="axial binding residue" evidence="2">
    <location>
        <position position="84"/>
    </location>
    <ligand>
        <name>heme b</name>
        <dbReference type="ChEBI" id="CHEBI:60344"/>
        <label>2</label>
    </ligand>
    <ligandPart>
        <name>Fe</name>
        <dbReference type="ChEBI" id="CHEBI:18248"/>
    </ligandPart>
</feature>
<feature type="binding site" evidence="1">
    <location>
        <begin position="114"/>
        <end position="123"/>
    </location>
    <ligand>
        <name>monodehydro-L-ascorbate radical</name>
        <dbReference type="ChEBI" id="CHEBI:59513"/>
    </ligand>
</feature>
<feature type="binding site" description="axial binding residue" evidence="2">
    <location>
        <position position="118"/>
    </location>
    <ligand>
        <name>heme b</name>
        <dbReference type="ChEBI" id="CHEBI:60344"/>
        <label>1</label>
    </ligand>
    <ligandPart>
        <name>Fe</name>
        <dbReference type="ChEBI" id="CHEBI:18248"/>
    </ligandPart>
</feature>
<feature type="binding site" description="axial binding residue" evidence="2">
    <location>
        <position position="157"/>
    </location>
    <ligand>
        <name>heme b</name>
        <dbReference type="ChEBI" id="CHEBI:60344"/>
        <label>2</label>
    </ligand>
    <ligandPart>
        <name>Fe</name>
        <dbReference type="ChEBI" id="CHEBI:18248"/>
    </ligandPart>
</feature>
<keyword id="KW-0249">Electron transport</keyword>
<keyword id="KW-0349">Heme</keyword>
<keyword id="KW-0408">Iron</keyword>
<keyword id="KW-0472">Membrane</keyword>
<keyword id="KW-0479">Metal-binding</keyword>
<keyword id="KW-0560">Oxidoreductase</keyword>
<keyword id="KW-1185">Reference proteome</keyword>
<keyword id="KW-0812">Transmembrane</keyword>
<keyword id="KW-1133">Transmembrane helix</keyword>
<keyword id="KW-0813">Transport</keyword>
<dbReference type="EC" id="1.-.-.-"/>
<dbReference type="EMBL" id="AP004133">
    <property type="protein sequence ID" value="BAD25232.1"/>
    <property type="status" value="ALT_SEQ"/>
    <property type="molecule type" value="Genomic_DNA"/>
</dbReference>
<dbReference type="EMBL" id="AP008208">
    <property type="protein sequence ID" value="BAF09469.1"/>
    <property type="molecule type" value="Genomic_DNA"/>
</dbReference>
<dbReference type="EMBL" id="AP014958">
    <property type="status" value="NOT_ANNOTATED_CDS"/>
    <property type="molecule type" value="Genomic_DNA"/>
</dbReference>
<dbReference type="EMBL" id="CM000139">
    <property type="protein sequence ID" value="EAZ23965.1"/>
    <property type="molecule type" value="Genomic_DNA"/>
</dbReference>
<dbReference type="RefSeq" id="XP_015623020.1">
    <property type="nucleotide sequence ID" value="XM_015767534.1"/>
</dbReference>
<dbReference type="SMR" id="A3A9H6"/>
<dbReference type="FunCoup" id="A3A9H6">
    <property type="interactions" value="656"/>
</dbReference>
<dbReference type="STRING" id="39947.A3A9H6"/>
<dbReference type="PaxDb" id="39947-A3A9H6"/>
<dbReference type="KEGG" id="dosa:Os02g0642300"/>
<dbReference type="eggNOG" id="KOG1619">
    <property type="taxonomic scope" value="Eukaryota"/>
</dbReference>
<dbReference type="InParanoid" id="A3A9H6"/>
<dbReference type="OrthoDB" id="907479at2759"/>
<dbReference type="Proteomes" id="UP000000763">
    <property type="component" value="Chromosome 2"/>
</dbReference>
<dbReference type="Proteomes" id="UP000007752">
    <property type="component" value="Chromosome 2"/>
</dbReference>
<dbReference type="Proteomes" id="UP000059680">
    <property type="component" value="Chromosome 2"/>
</dbReference>
<dbReference type="GO" id="GO:0016020">
    <property type="term" value="C:membrane"/>
    <property type="evidence" value="ECO:0007669"/>
    <property type="project" value="UniProtKB-SubCell"/>
</dbReference>
<dbReference type="GO" id="GO:0046872">
    <property type="term" value="F:metal ion binding"/>
    <property type="evidence" value="ECO:0007669"/>
    <property type="project" value="UniProtKB-KW"/>
</dbReference>
<dbReference type="GO" id="GO:0016491">
    <property type="term" value="F:oxidoreductase activity"/>
    <property type="evidence" value="ECO:0000318"/>
    <property type="project" value="GO_Central"/>
</dbReference>
<dbReference type="CDD" id="cd08766">
    <property type="entry name" value="Cyt_b561_ACYB-1_like"/>
    <property type="match status" value="1"/>
</dbReference>
<dbReference type="FunFam" id="1.20.120.1770:FF:000001">
    <property type="entry name" value="Cytochrome b reductase 1"/>
    <property type="match status" value="1"/>
</dbReference>
<dbReference type="Gene3D" id="1.20.120.1770">
    <property type="match status" value="1"/>
</dbReference>
<dbReference type="InterPro" id="IPR043205">
    <property type="entry name" value="CYB561/CYBRD1-like"/>
</dbReference>
<dbReference type="InterPro" id="IPR006593">
    <property type="entry name" value="Cyt_b561/ferric_Rdtase_TM"/>
</dbReference>
<dbReference type="PANTHER" id="PTHR10106">
    <property type="entry name" value="CYTOCHROME B561-RELATED"/>
    <property type="match status" value="1"/>
</dbReference>
<dbReference type="PANTHER" id="PTHR10106:SF22">
    <property type="entry name" value="TRANSMEMBRANE ASCORBATE FERRIREDUCTASE 1"/>
    <property type="match status" value="1"/>
</dbReference>
<dbReference type="Pfam" id="PF03188">
    <property type="entry name" value="Cytochrom_B561"/>
    <property type="match status" value="1"/>
</dbReference>
<dbReference type="SMART" id="SM00665">
    <property type="entry name" value="B561"/>
    <property type="match status" value="1"/>
</dbReference>
<dbReference type="PROSITE" id="PS50939">
    <property type="entry name" value="CYTOCHROME_B561"/>
    <property type="match status" value="1"/>
</dbReference>
<organism>
    <name type="scientific">Oryza sativa subsp. japonica</name>
    <name type="common">Rice</name>
    <dbReference type="NCBI Taxonomy" id="39947"/>
    <lineage>
        <taxon>Eukaryota</taxon>
        <taxon>Viridiplantae</taxon>
        <taxon>Streptophyta</taxon>
        <taxon>Embryophyta</taxon>
        <taxon>Tracheophyta</taxon>
        <taxon>Spermatophyta</taxon>
        <taxon>Magnoliopsida</taxon>
        <taxon>Liliopsida</taxon>
        <taxon>Poales</taxon>
        <taxon>Poaceae</taxon>
        <taxon>BOP clade</taxon>
        <taxon>Oryzoideae</taxon>
        <taxon>Oryzeae</taxon>
        <taxon>Oryzinae</taxon>
        <taxon>Oryza</taxon>
        <taxon>Oryza sativa</taxon>
    </lineage>
</organism>
<name>ACET1_ORYSJ</name>
<reference key="1">
    <citation type="journal article" date="2005" name="Nature">
        <title>The map-based sequence of the rice genome.</title>
        <authorList>
            <consortium name="International rice genome sequencing project (IRGSP)"/>
        </authorList>
    </citation>
    <scope>NUCLEOTIDE SEQUENCE [LARGE SCALE GENOMIC DNA]</scope>
    <source>
        <strain>cv. Nipponbare</strain>
    </source>
</reference>
<reference key="2">
    <citation type="journal article" date="2008" name="Nucleic Acids Res.">
        <title>The rice annotation project database (RAP-DB): 2008 update.</title>
        <authorList>
            <consortium name="The rice annotation project (RAP)"/>
        </authorList>
    </citation>
    <scope>GENOME REANNOTATION</scope>
    <source>
        <strain>cv. Nipponbare</strain>
    </source>
</reference>
<reference key="3">
    <citation type="journal article" date="2013" name="Rice">
        <title>Improvement of the Oryza sativa Nipponbare reference genome using next generation sequence and optical map data.</title>
        <authorList>
            <person name="Kawahara Y."/>
            <person name="de la Bastide M."/>
            <person name="Hamilton J.P."/>
            <person name="Kanamori H."/>
            <person name="McCombie W.R."/>
            <person name="Ouyang S."/>
            <person name="Schwartz D.C."/>
            <person name="Tanaka T."/>
            <person name="Wu J."/>
            <person name="Zhou S."/>
            <person name="Childs K.L."/>
            <person name="Davidson R.M."/>
            <person name="Lin H."/>
            <person name="Quesada-Ocampo L."/>
            <person name="Vaillancourt B."/>
            <person name="Sakai H."/>
            <person name="Lee S.S."/>
            <person name="Kim J."/>
            <person name="Numa H."/>
            <person name="Itoh T."/>
            <person name="Buell C.R."/>
            <person name="Matsumoto T."/>
        </authorList>
    </citation>
    <scope>GENOME REANNOTATION</scope>
    <source>
        <strain>cv. Nipponbare</strain>
    </source>
</reference>
<reference key="4">
    <citation type="journal article" date="2005" name="PLoS Biol.">
        <title>The genomes of Oryza sativa: a history of duplications.</title>
        <authorList>
            <person name="Yu J."/>
            <person name="Wang J."/>
            <person name="Lin W."/>
            <person name="Li S."/>
            <person name="Li H."/>
            <person name="Zhou J."/>
            <person name="Ni P."/>
            <person name="Dong W."/>
            <person name="Hu S."/>
            <person name="Zeng C."/>
            <person name="Zhang J."/>
            <person name="Zhang Y."/>
            <person name="Li R."/>
            <person name="Xu Z."/>
            <person name="Li S."/>
            <person name="Li X."/>
            <person name="Zheng H."/>
            <person name="Cong L."/>
            <person name="Lin L."/>
            <person name="Yin J."/>
            <person name="Geng J."/>
            <person name="Li G."/>
            <person name="Shi J."/>
            <person name="Liu J."/>
            <person name="Lv H."/>
            <person name="Li J."/>
            <person name="Wang J."/>
            <person name="Deng Y."/>
            <person name="Ran L."/>
            <person name="Shi X."/>
            <person name="Wang X."/>
            <person name="Wu Q."/>
            <person name="Li C."/>
            <person name="Ren X."/>
            <person name="Wang J."/>
            <person name="Wang X."/>
            <person name="Li D."/>
            <person name="Liu D."/>
            <person name="Zhang X."/>
            <person name="Ji Z."/>
            <person name="Zhao W."/>
            <person name="Sun Y."/>
            <person name="Zhang Z."/>
            <person name="Bao J."/>
            <person name="Han Y."/>
            <person name="Dong L."/>
            <person name="Ji J."/>
            <person name="Chen P."/>
            <person name="Wu S."/>
            <person name="Liu J."/>
            <person name="Xiao Y."/>
            <person name="Bu D."/>
            <person name="Tan J."/>
            <person name="Yang L."/>
            <person name="Ye C."/>
            <person name="Zhang J."/>
            <person name="Xu J."/>
            <person name="Zhou Y."/>
            <person name="Yu Y."/>
            <person name="Zhang B."/>
            <person name="Zhuang S."/>
            <person name="Wei H."/>
            <person name="Liu B."/>
            <person name="Lei M."/>
            <person name="Yu H."/>
            <person name="Li Y."/>
            <person name="Xu H."/>
            <person name="Wei S."/>
            <person name="He X."/>
            <person name="Fang L."/>
            <person name="Zhang Z."/>
            <person name="Zhang Y."/>
            <person name="Huang X."/>
            <person name="Su Z."/>
            <person name="Tong W."/>
            <person name="Li J."/>
            <person name="Tong Z."/>
            <person name="Li S."/>
            <person name="Ye J."/>
            <person name="Wang L."/>
            <person name="Fang L."/>
            <person name="Lei T."/>
            <person name="Chen C.-S."/>
            <person name="Chen H.-C."/>
            <person name="Xu Z."/>
            <person name="Li H."/>
            <person name="Huang H."/>
            <person name="Zhang F."/>
            <person name="Xu H."/>
            <person name="Li N."/>
            <person name="Zhao C."/>
            <person name="Li S."/>
            <person name="Dong L."/>
            <person name="Huang Y."/>
            <person name="Li L."/>
            <person name="Xi Y."/>
            <person name="Qi Q."/>
            <person name="Li W."/>
            <person name="Zhang B."/>
            <person name="Hu W."/>
            <person name="Zhang Y."/>
            <person name="Tian X."/>
            <person name="Jiao Y."/>
            <person name="Liang X."/>
            <person name="Jin J."/>
            <person name="Gao L."/>
            <person name="Zheng W."/>
            <person name="Hao B."/>
            <person name="Liu S.-M."/>
            <person name="Wang W."/>
            <person name="Yuan L."/>
            <person name="Cao M."/>
            <person name="McDermott J."/>
            <person name="Samudrala R."/>
            <person name="Wang J."/>
            <person name="Wong G.K.-S."/>
            <person name="Yang H."/>
        </authorList>
    </citation>
    <scope>NUCLEOTIDE SEQUENCE [LARGE SCALE GENOMIC DNA]</scope>
    <source>
        <strain>cv. Nipponbare</strain>
    </source>
</reference>
<proteinExistence type="inferred from homology"/>
<evidence type="ECO:0000250" key="1"/>
<evidence type="ECO:0000250" key="2">
    <source>
        <dbReference type="UniProtKB" id="Q9SWS1"/>
    </source>
</evidence>
<evidence type="ECO:0000255" key="3"/>
<evidence type="ECO:0000255" key="4">
    <source>
        <dbReference type="PROSITE-ProRule" id="PRU00242"/>
    </source>
</evidence>
<evidence type="ECO:0000305" key="5"/>
<sequence length="234" mass="25598">MGLGVRAAPFTYVAHALAVAAATMVLVWCIHFRGGLAFEATNKNLIFNVHPVLMLIGYIILGSEAIMVYKVLPTWKHDTTKLIHLILHAIALVFGAVGIYCAFKFHNESGIANLYSLHSWLGIGTICLYGIQWIFGFVAFFFPRASPSVRKGVLPWHILFGLFVYILALATAELGFLEKLTFLQSSGLDKYGAEAFLVNFTALIVVLFGASVVVAAVSPARVEEPHEYAPIPES</sequence>
<gene>
    <name type="ordered locus">Os02g0642300</name>
    <name type="ordered locus">LOC_Os02g42890</name>
    <name type="ORF">OJ1112_G03.14</name>
    <name type="ORF">OsJ_07691</name>
</gene>